<reference key="1">
    <citation type="journal article" date="2002" name="Nucleic Acids Res.">
        <title>Genome sequence of Oceanobacillus iheyensis isolated from the Iheya Ridge and its unexpected adaptive capabilities to extreme environments.</title>
        <authorList>
            <person name="Takami H."/>
            <person name="Takaki Y."/>
            <person name="Uchiyama I."/>
        </authorList>
    </citation>
    <scope>NUCLEOTIDE SEQUENCE [LARGE SCALE GENOMIC DNA]</scope>
    <source>
        <strain>DSM 14371 / CIP 107618 / JCM 11309 / KCTC 3954 / HTE831</strain>
    </source>
</reference>
<organism>
    <name type="scientific">Oceanobacillus iheyensis (strain DSM 14371 / CIP 107618 / JCM 11309 / KCTC 3954 / HTE831)</name>
    <dbReference type="NCBI Taxonomy" id="221109"/>
    <lineage>
        <taxon>Bacteria</taxon>
        <taxon>Bacillati</taxon>
        <taxon>Bacillota</taxon>
        <taxon>Bacilli</taxon>
        <taxon>Bacillales</taxon>
        <taxon>Bacillaceae</taxon>
        <taxon>Oceanobacillus</taxon>
    </lineage>
</organism>
<evidence type="ECO:0000250" key="1"/>
<evidence type="ECO:0000255" key="2">
    <source>
        <dbReference type="HAMAP-Rule" id="MF_00118"/>
    </source>
</evidence>
<dbReference type="EC" id="3.6.5.3" evidence="2"/>
<dbReference type="EMBL" id="BA000028">
    <property type="protein sequence ID" value="BAC12073.1"/>
    <property type="molecule type" value="Genomic_DNA"/>
</dbReference>
<dbReference type="RefSeq" id="WP_011064520.1">
    <property type="nucleotide sequence ID" value="NC_004193.1"/>
</dbReference>
<dbReference type="SMR" id="Q8ETY4"/>
<dbReference type="STRING" id="221109.gene:10732307"/>
<dbReference type="KEGG" id="oih:OB0117"/>
<dbReference type="eggNOG" id="COG0050">
    <property type="taxonomic scope" value="Bacteria"/>
</dbReference>
<dbReference type="HOGENOM" id="CLU_007265_0_1_9"/>
<dbReference type="OrthoDB" id="9804504at2"/>
<dbReference type="PhylomeDB" id="Q8ETY4"/>
<dbReference type="Proteomes" id="UP000000822">
    <property type="component" value="Chromosome"/>
</dbReference>
<dbReference type="GO" id="GO:0005829">
    <property type="term" value="C:cytosol"/>
    <property type="evidence" value="ECO:0007669"/>
    <property type="project" value="TreeGrafter"/>
</dbReference>
<dbReference type="GO" id="GO:0005525">
    <property type="term" value="F:GTP binding"/>
    <property type="evidence" value="ECO:0007669"/>
    <property type="project" value="UniProtKB-UniRule"/>
</dbReference>
<dbReference type="GO" id="GO:0003924">
    <property type="term" value="F:GTPase activity"/>
    <property type="evidence" value="ECO:0007669"/>
    <property type="project" value="InterPro"/>
</dbReference>
<dbReference type="GO" id="GO:0003746">
    <property type="term" value="F:translation elongation factor activity"/>
    <property type="evidence" value="ECO:0007669"/>
    <property type="project" value="UniProtKB-UniRule"/>
</dbReference>
<dbReference type="CDD" id="cd01884">
    <property type="entry name" value="EF_Tu"/>
    <property type="match status" value="1"/>
</dbReference>
<dbReference type="CDD" id="cd03697">
    <property type="entry name" value="EFTU_II"/>
    <property type="match status" value="1"/>
</dbReference>
<dbReference type="CDD" id="cd03707">
    <property type="entry name" value="EFTU_III"/>
    <property type="match status" value="1"/>
</dbReference>
<dbReference type="FunFam" id="2.40.30.10:FF:000001">
    <property type="entry name" value="Elongation factor Tu"/>
    <property type="match status" value="1"/>
</dbReference>
<dbReference type="FunFam" id="3.40.50.300:FF:000003">
    <property type="entry name" value="Elongation factor Tu"/>
    <property type="match status" value="1"/>
</dbReference>
<dbReference type="Gene3D" id="3.40.50.300">
    <property type="entry name" value="P-loop containing nucleotide triphosphate hydrolases"/>
    <property type="match status" value="1"/>
</dbReference>
<dbReference type="Gene3D" id="2.40.30.10">
    <property type="entry name" value="Translation factors"/>
    <property type="match status" value="2"/>
</dbReference>
<dbReference type="HAMAP" id="MF_00118_B">
    <property type="entry name" value="EF_Tu_B"/>
    <property type="match status" value="1"/>
</dbReference>
<dbReference type="InterPro" id="IPR041709">
    <property type="entry name" value="EF-Tu_GTP-bd"/>
</dbReference>
<dbReference type="InterPro" id="IPR050055">
    <property type="entry name" value="EF-Tu_GTPase"/>
</dbReference>
<dbReference type="InterPro" id="IPR004161">
    <property type="entry name" value="EFTu-like_2"/>
</dbReference>
<dbReference type="InterPro" id="IPR033720">
    <property type="entry name" value="EFTU_2"/>
</dbReference>
<dbReference type="InterPro" id="IPR031157">
    <property type="entry name" value="G_TR_CS"/>
</dbReference>
<dbReference type="InterPro" id="IPR027417">
    <property type="entry name" value="P-loop_NTPase"/>
</dbReference>
<dbReference type="InterPro" id="IPR005225">
    <property type="entry name" value="Small_GTP-bd"/>
</dbReference>
<dbReference type="InterPro" id="IPR000795">
    <property type="entry name" value="T_Tr_GTP-bd_dom"/>
</dbReference>
<dbReference type="InterPro" id="IPR009000">
    <property type="entry name" value="Transl_B-barrel_sf"/>
</dbReference>
<dbReference type="InterPro" id="IPR009001">
    <property type="entry name" value="Transl_elong_EF1A/Init_IF2_C"/>
</dbReference>
<dbReference type="InterPro" id="IPR004541">
    <property type="entry name" value="Transl_elong_EFTu/EF1A_bac/org"/>
</dbReference>
<dbReference type="InterPro" id="IPR004160">
    <property type="entry name" value="Transl_elong_EFTu/EF1A_C"/>
</dbReference>
<dbReference type="NCBIfam" id="TIGR00485">
    <property type="entry name" value="EF-Tu"/>
    <property type="match status" value="1"/>
</dbReference>
<dbReference type="NCBIfam" id="NF000766">
    <property type="entry name" value="PRK00049.1"/>
    <property type="match status" value="1"/>
</dbReference>
<dbReference type="NCBIfam" id="NF009372">
    <property type="entry name" value="PRK12735.1"/>
    <property type="match status" value="1"/>
</dbReference>
<dbReference type="NCBIfam" id="NF009373">
    <property type="entry name" value="PRK12736.1"/>
    <property type="match status" value="1"/>
</dbReference>
<dbReference type="NCBIfam" id="TIGR00231">
    <property type="entry name" value="small_GTP"/>
    <property type="match status" value="1"/>
</dbReference>
<dbReference type="PANTHER" id="PTHR43721:SF22">
    <property type="entry name" value="ELONGATION FACTOR TU, MITOCHONDRIAL"/>
    <property type="match status" value="1"/>
</dbReference>
<dbReference type="PANTHER" id="PTHR43721">
    <property type="entry name" value="ELONGATION FACTOR TU-RELATED"/>
    <property type="match status" value="1"/>
</dbReference>
<dbReference type="Pfam" id="PF00009">
    <property type="entry name" value="GTP_EFTU"/>
    <property type="match status" value="1"/>
</dbReference>
<dbReference type="Pfam" id="PF03144">
    <property type="entry name" value="GTP_EFTU_D2"/>
    <property type="match status" value="1"/>
</dbReference>
<dbReference type="Pfam" id="PF03143">
    <property type="entry name" value="GTP_EFTU_D3"/>
    <property type="match status" value="1"/>
</dbReference>
<dbReference type="PRINTS" id="PR00315">
    <property type="entry name" value="ELONGATNFCT"/>
</dbReference>
<dbReference type="SUPFAM" id="SSF50465">
    <property type="entry name" value="EF-Tu/eEF-1alpha/eIF2-gamma C-terminal domain"/>
    <property type="match status" value="1"/>
</dbReference>
<dbReference type="SUPFAM" id="SSF52540">
    <property type="entry name" value="P-loop containing nucleoside triphosphate hydrolases"/>
    <property type="match status" value="1"/>
</dbReference>
<dbReference type="SUPFAM" id="SSF50447">
    <property type="entry name" value="Translation proteins"/>
    <property type="match status" value="1"/>
</dbReference>
<dbReference type="PROSITE" id="PS00301">
    <property type="entry name" value="G_TR_1"/>
    <property type="match status" value="1"/>
</dbReference>
<dbReference type="PROSITE" id="PS51722">
    <property type="entry name" value="G_TR_2"/>
    <property type="match status" value="1"/>
</dbReference>
<sequence>MAKEKFDRSKSHVNVGTLGHVDHGKTTLTAAITTVLAKHGGGEARAYDQIDGAPEERERGITISTAHVEYETETRHYAHVDCPGHADYVKNMITGAAQMDGAILVVSAADGPMPQTREHILLSRNVGVPAFVVFLNKTDMVDDEELLELVEMEVRDLLTEYDFPGDDLPVIKGSALKALEGVAEYEERILELMAAVDEYIPTPERDKEKPFMMPVEDVFSITGRGTVATGRVERGEVKVGDEVEIIGLAEDASKTTVTGVEMFRKLLDYAEAGDNIGALLRGVSREDINRGQVLAKPGSITPHTNFKAEVYVLSKEEGGRHTPFFSNYRPQFYFRTTDVTGVIELPEGTEMVMPGDNIEMTVELISPIAIEDGTRFSIREGGRTVGSGVVSSIQK</sequence>
<protein>
    <recommendedName>
        <fullName evidence="2">Elongation factor Tu</fullName>
        <shortName evidence="2">EF-Tu</shortName>
        <ecNumber evidence="2">3.6.5.3</ecNumber>
    </recommendedName>
</protein>
<comment type="function">
    <text evidence="2">GTP hydrolase that promotes the GTP-dependent binding of aminoacyl-tRNA to the A-site of ribosomes during protein biosynthesis.</text>
</comment>
<comment type="catalytic activity">
    <reaction evidence="2">
        <text>GTP + H2O = GDP + phosphate + H(+)</text>
        <dbReference type="Rhea" id="RHEA:19669"/>
        <dbReference type="ChEBI" id="CHEBI:15377"/>
        <dbReference type="ChEBI" id="CHEBI:15378"/>
        <dbReference type="ChEBI" id="CHEBI:37565"/>
        <dbReference type="ChEBI" id="CHEBI:43474"/>
        <dbReference type="ChEBI" id="CHEBI:58189"/>
        <dbReference type="EC" id="3.6.5.3"/>
    </reaction>
    <physiologicalReaction direction="left-to-right" evidence="2">
        <dbReference type="Rhea" id="RHEA:19670"/>
    </physiologicalReaction>
</comment>
<comment type="subunit">
    <text evidence="2">Monomer.</text>
</comment>
<comment type="subcellular location">
    <subcellularLocation>
        <location evidence="2">Cytoplasm</location>
    </subcellularLocation>
</comment>
<comment type="similarity">
    <text evidence="2">Belongs to the TRAFAC class translation factor GTPase superfamily. Classic translation factor GTPase family. EF-Tu/EF-1A subfamily.</text>
</comment>
<proteinExistence type="inferred from homology"/>
<accession>Q8ETY4</accession>
<gene>
    <name evidence="2" type="primary">tuf</name>
    <name type="synonym">tufA</name>
    <name type="ordered locus">OB0117</name>
</gene>
<keyword id="KW-0963">Cytoplasm</keyword>
<keyword id="KW-0251">Elongation factor</keyword>
<keyword id="KW-0342">GTP-binding</keyword>
<keyword id="KW-0378">Hydrolase</keyword>
<keyword id="KW-0460">Magnesium</keyword>
<keyword id="KW-0479">Metal-binding</keyword>
<keyword id="KW-0547">Nucleotide-binding</keyword>
<keyword id="KW-0648">Protein biosynthesis</keyword>
<keyword id="KW-1185">Reference proteome</keyword>
<feature type="chain" id="PRO_0000091358" description="Elongation factor Tu">
    <location>
        <begin position="1"/>
        <end position="395"/>
    </location>
</feature>
<feature type="domain" description="tr-type G">
    <location>
        <begin position="10"/>
        <end position="204"/>
    </location>
</feature>
<feature type="region of interest" description="G1" evidence="1">
    <location>
        <begin position="19"/>
        <end position="26"/>
    </location>
</feature>
<feature type="region of interest" description="G2" evidence="1">
    <location>
        <begin position="60"/>
        <end position="64"/>
    </location>
</feature>
<feature type="region of interest" description="G3" evidence="1">
    <location>
        <begin position="81"/>
        <end position="84"/>
    </location>
</feature>
<feature type="region of interest" description="G4" evidence="1">
    <location>
        <begin position="136"/>
        <end position="139"/>
    </location>
</feature>
<feature type="region of interest" description="G5" evidence="1">
    <location>
        <begin position="174"/>
        <end position="176"/>
    </location>
</feature>
<feature type="binding site" evidence="2">
    <location>
        <begin position="19"/>
        <end position="26"/>
    </location>
    <ligand>
        <name>GTP</name>
        <dbReference type="ChEBI" id="CHEBI:37565"/>
    </ligand>
</feature>
<feature type="binding site" evidence="2">
    <location>
        <position position="26"/>
    </location>
    <ligand>
        <name>Mg(2+)</name>
        <dbReference type="ChEBI" id="CHEBI:18420"/>
    </ligand>
</feature>
<feature type="binding site" evidence="2">
    <location>
        <begin position="81"/>
        <end position="85"/>
    </location>
    <ligand>
        <name>GTP</name>
        <dbReference type="ChEBI" id="CHEBI:37565"/>
    </ligand>
</feature>
<feature type="binding site" evidence="2">
    <location>
        <begin position="136"/>
        <end position="139"/>
    </location>
    <ligand>
        <name>GTP</name>
        <dbReference type="ChEBI" id="CHEBI:37565"/>
    </ligand>
</feature>
<name>EFTU_OCEIH</name>